<evidence type="ECO:0000255" key="1">
    <source>
        <dbReference type="HAMAP-Rule" id="MF_03111"/>
    </source>
</evidence>
<organism>
    <name type="scientific">Saccharomyces cerevisiae (strain RM11-1a)</name>
    <name type="common">Baker's yeast</name>
    <dbReference type="NCBI Taxonomy" id="285006"/>
    <lineage>
        <taxon>Eukaryota</taxon>
        <taxon>Fungi</taxon>
        <taxon>Dikarya</taxon>
        <taxon>Ascomycota</taxon>
        <taxon>Saccharomycotina</taxon>
        <taxon>Saccharomycetes</taxon>
        <taxon>Saccharomycetales</taxon>
        <taxon>Saccharomycetaceae</taxon>
        <taxon>Saccharomyces</taxon>
    </lineage>
</organism>
<comment type="function">
    <text evidence="1">Lyase that catalyzes the C1-decarboxylation of 4-hydroxy-3-methoxy-5-(all-trans-hexaprenyl)benzoic acid into 2-methoxy-6-(all-trans-hexaprenyl)phenol during ubiquinone biosynthesis.</text>
</comment>
<comment type="catalytic activity">
    <reaction evidence="1">
        <text>4-hydroxy-3-methoxy-5-(all-trans-hexaprenyl)benzoate + H(+) = 2-methoxy-6-(all-trans-hexaprenyl)phenol + CO2</text>
        <dbReference type="Rhea" id="RHEA:44768"/>
        <dbReference type="ChEBI" id="CHEBI:1109"/>
        <dbReference type="ChEBI" id="CHEBI:15378"/>
        <dbReference type="ChEBI" id="CHEBI:16526"/>
        <dbReference type="ChEBI" id="CHEBI:57916"/>
        <dbReference type="EC" id="4.1.1.130"/>
    </reaction>
</comment>
<comment type="cofactor">
    <cofactor evidence="1">
        <name>Zn(2+)</name>
        <dbReference type="ChEBI" id="CHEBI:29105"/>
    </cofactor>
</comment>
<comment type="pathway">
    <text evidence="1">Cofactor biosynthesis; ubiquinone biosynthesis.</text>
</comment>
<comment type="subunit">
    <text evidence="1">Component of a multi-subunit COQ enzyme complex, composed of at least COQ3, COQ4, COQ5, COQ6, COQ7 and COQ9. Interacts with COQ3.</text>
</comment>
<comment type="subcellular location">
    <subcellularLocation>
        <location evidence="1">Mitochondrion inner membrane</location>
        <topology evidence="1">Peripheral membrane protein</topology>
        <orientation evidence="1">Matrix side</orientation>
    </subcellularLocation>
</comment>
<comment type="similarity">
    <text evidence="1">Belongs to the COQ4 family.</text>
</comment>
<accession>B3LG81</accession>
<feature type="transit peptide" description="Mitochondrion" evidence="1">
    <location>
        <begin position="1"/>
        <end position="10"/>
    </location>
</feature>
<feature type="chain" id="PRO_0000388135" description="Ubiquinone biosynthesis protein COQ4, mitochondrial">
    <location>
        <begin position="11"/>
        <end position="335"/>
    </location>
</feature>
<feature type="binding site" evidence="1">
    <location>
        <position position="210"/>
    </location>
    <ligand>
        <name>Zn(2+)</name>
        <dbReference type="ChEBI" id="CHEBI:29105"/>
    </ligand>
</feature>
<feature type="binding site" evidence="1">
    <location>
        <position position="211"/>
    </location>
    <ligand>
        <name>Zn(2+)</name>
        <dbReference type="ChEBI" id="CHEBI:29105"/>
    </ligand>
</feature>
<feature type="binding site" evidence="1">
    <location>
        <position position="214"/>
    </location>
    <ligand>
        <name>Zn(2+)</name>
        <dbReference type="ChEBI" id="CHEBI:29105"/>
    </ligand>
</feature>
<feature type="binding site" evidence="1">
    <location>
        <position position="226"/>
    </location>
    <ligand>
        <name>Zn(2+)</name>
        <dbReference type="ChEBI" id="CHEBI:29105"/>
    </ligand>
</feature>
<keyword id="KW-0456">Lyase</keyword>
<keyword id="KW-0472">Membrane</keyword>
<keyword id="KW-0479">Metal-binding</keyword>
<keyword id="KW-0496">Mitochondrion</keyword>
<keyword id="KW-0999">Mitochondrion inner membrane</keyword>
<keyword id="KW-0809">Transit peptide</keyword>
<keyword id="KW-0831">Ubiquinone biosynthesis</keyword>
<keyword id="KW-0862">Zinc</keyword>
<proteinExistence type="inferred from homology"/>
<gene>
    <name evidence="1" type="primary">COQ4</name>
    <name type="ORF">SCRG_00318</name>
</gene>
<reference key="1">
    <citation type="submission" date="2005-03" db="EMBL/GenBank/DDBJ databases">
        <title>Annotation of the Saccharomyces cerevisiae RM11-1a genome.</title>
        <authorList>
            <consortium name="The Broad Institute Genome Sequencing Platform"/>
            <person name="Birren B.W."/>
            <person name="Lander E.S."/>
            <person name="Galagan J.E."/>
            <person name="Nusbaum C."/>
            <person name="Devon K."/>
            <person name="Cuomo C."/>
            <person name="Jaffe D.B."/>
            <person name="Butler J."/>
            <person name="Alvarez P."/>
            <person name="Gnerre S."/>
            <person name="Grabherr M."/>
            <person name="Kleber M."/>
            <person name="Mauceli E.W."/>
            <person name="Brockman W."/>
            <person name="MacCallum I.A."/>
            <person name="Rounsley S."/>
            <person name="Young S.K."/>
            <person name="LaButti K."/>
            <person name="Pushparaj V."/>
            <person name="DeCaprio D."/>
            <person name="Crawford M."/>
            <person name="Koehrsen M."/>
            <person name="Engels R."/>
            <person name="Montgomery P."/>
            <person name="Pearson M."/>
            <person name="Howarth C."/>
            <person name="Larson L."/>
            <person name="Luoma S."/>
            <person name="White J."/>
            <person name="O'Leary S."/>
            <person name="Kodira C.D."/>
            <person name="Zeng Q."/>
            <person name="Yandava C."/>
            <person name="Alvarado L."/>
            <person name="Pratt S."/>
            <person name="Kruglyak L."/>
        </authorList>
    </citation>
    <scope>NUCLEOTIDE SEQUENCE [LARGE SCALE GENOMIC DNA]</scope>
    <source>
        <strain>RM11-1a</strain>
    </source>
</reference>
<protein>
    <recommendedName>
        <fullName evidence="1">Ubiquinone biosynthesis protein COQ4, mitochondrial</fullName>
    </recommendedName>
    <alternativeName>
        <fullName evidence="1">4-hydroxy-3-methoxy-5-polyprenylbenzoate decarboxylase</fullName>
        <ecNumber evidence="1">4.1.1.130</ecNumber>
    </alternativeName>
    <alternativeName>
        <fullName evidence="1">Coenzyme Q biosynthesis protein 4</fullName>
    </alternativeName>
</protein>
<sequence>MLRLSLLRSTATLPVKCQRRGLILPAAAMYTLGSLIFGKEARLADAMERGELHNKNVDYAKEAEERTELRIRALANTRPMEPRYNGHVPLHRYEKLLLFAISGWNSFFHPEDGYNIVQLGEATALPVFLENLKQTMLSDSSGRRILKEQPNITTEILHMDKLAKLPHNTFGYVYYQWLKRENVSPDTRAPVKFIDDPMHAYISKRYRQCHDFYHAITNMPIIIEGEITIKALEGANLGVPMAILGGILAPLRLKKVQRKRLYNIYLPWAVRTGLSCKPLINVYWEEMLEKDVTALRKELKITLPPDLRTMRKERAALRKEIDAKYNSQKRATTPA</sequence>
<name>COQ4_YEAS1</name>
<dbReference type="EC" id="4.1.1.130" evidence="1"/>
<dbReference type="EMBL" id="CH408043">
    <property type="protein sequence ID" value="EDV08110.1"/>
    <property type="molecule type" value="Genomic_DNA"/>
</dbReference>
<dbReference type="SMR" id="B3LG81"/>
<dbReference type="HOGENOM" id="CLU_061241_0_2_1"/>
<dbReference type="OrthoDB" id="25083at4893"/>
<dbReference type="UniPathway" id="UPA00232"/>
<dbReference type="Proteomes" id="UP000008335">
    <property type="component" value="Unassembled WGS sequence"/>
</dbReference>
<dbReference type="GO" id="GO:0031314">
    <property type="term" value="C:extrinsic component of mitochondrial inner membrane"/>
    <property type="evidence" value="ECO:0007669"/>
    <property type="project" value="UniProtKB-UniRule"/>
</dbReference>
<dbReference type="GO" id="GO:0006744">
    <property type="term" value="P:ubiquinone biosynthetic process"/>
    <property type="evidence" value="ECO:0007669"/>
    <property type="project" value="UniProtKB-UniRule"/>
</dbReference>
<dbReference type="HAMAP" id="MF_03111">
    <property type="entry name" value="Coq4"/>
    <property type="match status" value="1"/>
</dbReference>
<dbReference type="InterPro" id="IPR007715">
    <property type="entry name" value="Coq4"/>
</dbReference>
<dbReference type="InterPro" id="IPR027540">
    <property type="entry name" value="Coq4_euk"/>
</dbReference>
<dbReference type="PANTHER" id="PTHR12922">
    <property type="entry name" value="UBIQUINONE BIOSYNTHESIS PROTEIN"/>
    <property type="match status" value="1"/>
</dbReference>
<dbReference type="PANTHER" id="PTHR12922:SF7">
    <property type="entry name" value="UBIQUINONE BIOSYNTHESIS PROTEIN COQ4 HOMOLOG, MITOCHONDRIAL"/>
    <property type="match status" value="1"/>
</dbReference>
<dbReference type="Pfam" id="PF05019">
    <property type="entry name" value="Coq4"/>
    <property type="match status" value="1"/>
</dbReference>